<gene>
    <name evidence="1" type="primary">csrA</name>
    <name type="ordered locus">Xfasm12_0102</name>
</gene>
<name>CSRA_XYLFM</name>
<evidence type="ECO:0000255" key="1">
    <source>
        <dbReference type="HAMAP-Rule" id="MF_00167"/>
    </source>
</evidence>
<keyword id="KW-0010">Activator</keyword>
<keyword id="KW-0963">Cytoplasm</keyword>
<keyword id="KW-0678">Repressor</keyword>
<keyword id="KW-0694">RNA-binding</keyword>
<keyword id="KW-0810">Translation regulation</keyword>
<comment type="function">
    <text evidence="1">A key translational regulator that binds mRNA to regulate translation initiation and/or mRNA stability. Mediates global changes in gene expression, shifting from rapid growth to stress survival by linking envelope stress, the stringent response and the catabolite repression systems. Usually binds in the 5'-UTR; binding at or near the Shine-Dalgarno sequence prevents ribosome-binding, repressing translation, binding elsewhere in the 5'-UTR can activate translation and/or stabilize the mRNA. Its function is antagonized by small RNA(s).</text>
</comment>
<comment type="subunit">
    <text evidence="1">Homodimer; the beta-strands of each monomer intercalate to form a hydrophobic core, while the alpha-helices form wings that extend away from the core.</text>
</comment>
<comment type="subcellular location">
    <subcellularLocation>
        <location evidence="1">Cytoplasm</location>
    </subcellularLocation>
</comment>
<comment type="similarity">
    <text evidence="1">Belongs to the CsrA/RsmA family.</text>
</comment>
<reference key="1">
    <citation type="journal article" date="2010" name="J. Bacteriol.">
        <title>Whole genome sequences of two Xylella fastidiosa strains (M12 and M23) causing almond leaf scorch disease in California.</title>
        <authorList>
            <person name="Chen J."/>
            <person name="Xie G."/>
            <person name="Han S."/>
            <person name="Chertkov O."/>
            <person name="Sims D."/>
            <person name="Civerolo E.L."/>
        </authorList>
    </citation>
    <scope>NUCLEOTIDE SEQUENCE [LARGE SCALE GENOMIC DNA]</scope>
    <source>
        <strain>M12</strain>
    </source>
</reference>
<dbReference type="EMBL" id="CP000941">
    <property type="protein sequence ID" value="ACA11142.1"/>
    <property type="molecule type" value="Genomic_DNA"/>
</dbReference>
<dbReference type="RefSeq" id="WP_004085529.1">
    <property type="nucleotide sequence ID" value="NC_010513.1"/>
</dbReference>
<dbReference type="SMR" id="B0U1L0"/>
<dbReference type="GeneID" id="93903786"/>
<dbReference type="KEGG" id="xfm:Xfasm12_0102"/>
<dbReference type="HOGENOM" id="CLU_164837_2_1_6"/>
<dbReference type="GO" id="GO:0005829">
    <property type="term" value="C:cytosol"/>
    <property type="evidence" value="ECO:0007669"/>
    <property type="project" value="TreeGrafter"/>
</dbReference>
<dbReference type="GO" id="GO:0048027">
    <property type="term" value="F:mRNA 5'-UTR binding"/>
    <property type="evidence" value="ECO:0007669"/>
    <property type="project" value="UniProtKB-UniRule"/>
</dbReference>
<dbReference type="GO" id="GO:0006402">
    <property type="term" value="P:mRNA catabolic process"/>
    <property type="evidence" value="ECO:0007669"/>
    <property type="project" value="InterPro"/>
</dbReference>
<dbReference type="GO" id="GO:0045947">
    <property type="term" value="P:negative regulation of translational initiation"/>
    <property type="evidence" value="ECO:0007669"/>
    <property type="project" value="UniProtKB-UniRule"/>
</dbReference>
<dbReference type="GO" id="GO:0045948">
    <property type="term" value="P:positive regulation of translational initiation"/>
    <property type="evidence" value="ECO:0007669"/>
    <property type="project" value="UniProtKB-UniRule"/>
</dbReference>
<dbReference type="GO" id="GO:0006109">
    <property type="term" value="P:regulation of carbohydrate metabolic process"/>
    <property type="evidence" value="ECO:0007669"/>
    <property type="project" value="UniProtKB-UniRule"/>
</dbReference>
<dbReference type="FunFam" id="2.60.40.4380:FF:000001">
    <property type="entry name" value="Translational regulator CsrA"/>
    <property type="match status" value="1"/>
</dbReference>
<dbReference type="Gene3D" id="2.60.40.4380">
    <property type="entry name" value="Translational regulator CsrA"/>
    <property type="match status" value="1"/>
</dbReference>
<dbReference type="HAMAP" id="MF_00167">
    <property type="entry name" value="CsrA"/>
    <property type="match status" value="1"/>
</dbReference>
<dbReference type="InterPro" id="IPR003751">
    <property type="entry name" value="CsrA"/>
</dbReference>
<dbReference type="InterPro" id="IPR036107">
    <property type="entry name" value="CsrA_sf"/>
</dbReference>
<dbReference type="NCBIfam" id="TIGR00202">
    <property type="entry name" value="csrA"/>
    <property type="match status" value="1"/>
</dbReference>
<dbReference type="NCBIfam" id="NF002469">
    <property type="entry name" value="PRK01712.1"/>
    <property type="match status" value="1"/>
</dbReference>
<dbReference type="PANTHER" id="PTHR34984">
    <property type="entry name" value="CARBON STORAGE REGULATOR"/>
    <property type="match status" value="1"/>
</dbReference>
<dbReference type="PANTHER" id="PTHR34984:SF1">
    <property type="entry name" value="CARBON STORAGE REGULATOR"/>
    <property type="match status" value="1"/>
</dbReference>
<dbReference type="Pfam" id="PF02599">
    <property type="entry name" value="CsrA"/>
    <property type="match status" value="1"/>
</dbReference>
<dbReference type="SUPFAM" id="SSF117130">
    <property type="entry name" value="CsrA-like"/>
    <property type="match status" value="1"/>
</dbReference>
<accession>B0U1L0</accession>
<organism>
    <name type="scientific">Xylella fastidiosa (strain M12)</name>
    <dbReference type="NCBI Taxonomy" id="405440"/>
    <lineage>
        <taxon>Bacteria</taxon>
        <taxon>Pseudomonadati</taxon>
        <taxon>Pseudomonadota</taxon>
        <taxon>Gammaproteobacteria</taxon>
        <taxon>Lysobacterales</taxon>
        <taxon>Lysobacteraceae</taxon>
        <taxon>Xylella</taxon>
    </lineage>
</organism>
<feature type="chain" id="PRO_1000097519" description="Translational regulator CsrA">
    <location>
        <begin position="1"/>
        <end position="71"/>
    </location>
</feature>
<sequence>MLILTRRSGETLMIGDQVTVTVLGVKGNQVRVGINAPKHVAVHREEIYHRIQRGDELACSSGTRGDSGSSI</sequence>
<protein>
    <recommendedName>
        <fullName evidence="1">Translational regulator CsrA</fullName>
    </recommendedName>
    <alternativeName>
        <fullName evidence="1">Carbon storage regulator</fullName>
    </alternativeName>
</protein>
<proteinExistence type="inferred from homology"/>